<accession>Q0IFL5</accession>
<feature type="chain" id="PRO_0000321326" description="Argininosuccinate synthase">
    <location>
        <begin position="1"/>
        <end position="412"/>
    </location>
</feature>
<feature type="binding site" evidence="1">
    <location>
        <begin position="10"/>
        <end position="18"/>
    </location>
    <ligand>
        <name>ATP</name>
        <dbReference type="ChEBI" id="CHEBI:30616"/>
    </ligand>
</feature>
<feature type="binding site" evidence="1">
    <location>
        <position position="36"/>
    </location>
    <ligand>
        <name>ATP</name>
        <dbReference type="ChEBI" id="CHEBI:30616"/>
    </ligand>
</feature>
<feature type="binding site" evidence="1">
    <location>
        <position position="87"/>
    </location>
    <ligand>
        <name>L-citrulline</name>
        <dbReference type="ChEBI" id="CHEBI:57743"/>
    </ligand>
</feature>
<feature type="binding site" evidence="1">
    <location>
        <position position="92"/>
    </location>
    <ligand>
        <name>L-citrulline</name>
        <dbReference type="ChEBI" id="CHEBI:57743"/>
    </ligand>
</feature>
<feature type="binding site" evidence="1">
    <location>
        <begin position="115"/>
        <end position="123"/>
    </location>
    <ligand>
        <name>ATP</name>
        <dbReference type="ChEBI" id="CHEBI:30616"/>
    </ligand>
</feature>
<feature type="binding site" evidence="1">
    <location>
        <position position="119"/>
    </location>
    <ligand>
        <name>L-aspartate</name>
        <dbReference type="ChEBI" id="CHEBI:29991"/>
    </ligand>
</feature>
<feature type="binding site" evidence="1">
    <location>
        <position position="123"/>
    </location>
    <ligand>
        <name>L-aspartate</name>
        <dbReference type="ChEBI" id="CHEBI:29991"/>
    </ligand>
</feature>
<feature type="binding site" evidence="1">
    <location>
        <position position="123"/>
    </location>
    <ligand>
        <name>L-citrulline</name>
        <dbReference type="ChEBI" id="CHEBI:57743"/>
    </ligand>
</feature>
<feature type="binding site" evidence="1">
    <location>
        <position position="124"/>
    </location>
    <ligand>
        <name>L-aspartate</name>
        <dbReference type="ChEBI" id="CHEBI:29991"/>
    </ligand>
</feature>
<feature type="binding site" evidence="1">
    <location>
        <position position="127"/>
    </location>
    <ligand>
        <name>L-citrulline</name>
        <dbReference type="ChEBI" id="CHEBI:57743"/>
    </ligand>
</feature>
<feature type="binding site" evidence="1">
    <location>
        <position position="180"/>
    </location>
    <ligand>
        <name>L-citrulline</name>
        <dbReference type="ChEBI" id="CHEBI:57743"/>
    </ligand>
</feature>
<feature type="binding site" evidence="1">
    <location>
        <position position="189"/>
    </location>
    <ligand>
        <name>L-citrulline</name>
        <dbReference type="ChEBI" id="CHEBI:57743"/>
    </ligand>
</feature>
<feature type="binding site" evidence="1">
    <location>
        <position position="270"/>
    </location>
    <ligand>
        <name>L-citrulline</name>
        <dbReference type="ChEBI" id="CHEBI:57743"/>
    </ligand>
</feature>
<feature type="binding site" evidence="1">
    <location>
        <position position="282"/>
    </location>
    <ligand>
        <name>L-citrulline</name>
        <dbReference type="ChEBI" id="CHEBI:57743"/>
    </ligand>
</feature>
<proteinExistence type="inferred from homology"/>
<organism>
    <name type="scientific">Aedes aegypti</name>
    <name type="common">Yellowfever mosquito</name>
    <name type="synonym">Culex aegypti</name>
    <dbReference type="NCBI Taxonomy" id="7159"/>
    <lineage>
        <taxon>Eukaryota</taxon>
        <taxon>Metazoa</taxon>
        <taxon>Ecdysozoa</taxon>
        <taxon>Arthropoda</taxon>
        <taxon>Hexapoda</taxon>
        <taxon>Insecta</taxon>
        <taxon>Pterygota</taxon>
        <taxon>Neoptera</taxon>
        <taxon>Endopterygota</taxon>
        <taxon>Diptera</taxon>
        <taxon>Nematocera</taxon>
        <taxon>Culicoidea</taxon>
        <taxon>Culicidae</taxon>
        <taxon>Culicinae</taxon>
        <taxon>Aedini</taxon>
        <taxon>Aedes</taxon>
        <taxon>Stegomyia</taxon>
    </lineage>
</organism>
<sequence>MSGKEKILLAYSGGLDTSCILKWLLEKGYEVICFMADVGQEEDFVAAREKALRVGAKDVIIKDMKRIFVEKFVWPAIQMGLVYEDRYLLGTSLARPCISIGLMESAAEHSCSIISHGATGKGNDQIRFELSCYALDPKIKVIAPWRLPEFCERFQGRKDLLDYAQKHGIPVSATPKAPWSMDANIMHISYESGILENPAKAAPEELYQMTQSVMKSSNTPIKVDITFKEGLPVTVLEHSGGKTLETPLEVLTFLNKIGGEQGVGRVDLVENRFLGLKSRGVYETPGATILHVAHKDMEVYCLDREIFRVKSFLALKMADYVYNGFWYSPEAEYVRTCLVGAQKNVSGKVTLEIFKGHVIAIARESTKTIYNQELASMDVHGTLSPYAATGFIEVNAMRLKEHYRVFGSANME</sequence>
<comment type="catalytic activity">
    <reaction>
        <text>L-citrulline + L-aspartate + ATP = 2-(N(omega)-L-arginino)succinate + AMP + diphosphate + H(+)</text>
        <dbReference type="Rhea" id="RHEA:10932"/>
        <dbReference type="ChEBI" id="CHEBI:15378"/>
        <dbReference type="ChEBI" id="CHEBI:29991"/>
        <dbReference type="ChEBI" id="CHEBI:30616"/>
        <dbReference type="ChEBI" id="CHEBI:33019"/>
        <dbReference type="ChEBI" id="CHEBI:57472"/>
        <dbReference type="ChEBI" id="CHEBI:57743"/>
        <dbReference type="ChEBI" id="CHEBI:456215"/>
        <dbReference type="EC" id="6.3.4.5"/>
    </reaction>
</comment>
<comment type="pathway">
    <text>Amino-acid biosynthesis; L-arginine biosynthesis; L-arginine from L-ornithine and carbamoyl phosphate: step 2/3.</text>
</comment>
<comment type="pathway">
    <text>Nitrogen metabolism; urea cycle; (N(omega)-L-arginino)succinate from L-aspartate and L-citrulline: step 1/1.</text>
</comment>
<comment type="subunit">
    <text evidence="1">Homotetramer.</text>
</comment>
<comment type="similarity">
    <text evidence="2">Belongs to the argininosuccinate synthase family.</text>
</comment>
<gene>
    <name type="ORF">AAEL004701</name>
</gene>
<dbReference type="EC" id="6.3.4.5"/>
<dbReference type="EMBL" id="CH477312">
    <property type="protein sequence ID" value="EAT43888.1"/>
    <property type="molecule type" value="Genomic_DNA"/>
</dbReference>
<dbReference type="RefSeq" id="XP_001649600.1">
    <property type="nucleotide sequence ID" value="XM_001649550.1"/>
</dbReference>
<dbReference type="SMR" id="Q0IFL5"/>
<dbReference type="FunCoup" id="Q0IFL5">
    <property type="interactions" value="621"/>
</dbReference>
<dbReference type="STRING" id="7159.Q0IFL5"/>
<dbReference type="PaxDb" id="7159-AAEL004701-PA"/>
<dbReference type="KEGG" id="aag:5565274"/>
<dbReference type="VEuPathDB" id="VectorBase:AAEL004701"/>
<dbReference type="eggNOG" id="KOG1706">
    <property type="taxonomic scope" value="Eukaryota"/>
</dbReference>
<dbReference type="HOGENOM" id="CLU_032784_4_2_1"/>
<dbReference type="InParanoid" id="Q0IFL5"/>
<dbReference type="OMA" id="WRWTVSP"/>
<dbReference type="OrthoDB" id="1688907at2759"/>
<dbReference type="PhylomeDB" id="Q0IFL5"/>
<dbReference type="UniPathway" id="UPA00068">
    <property type="reaction ID" value="UER00113"/>
</dbReference>
<dbReference type="UniPathway" id="UPA00158">
    <property type="reaction ID" value="UER00272"/>
</dbReference>
<dbReference type="Proteomes" id="UP000008820">
    <property type="component" value="Unassembled WGS sequence"/>
</dbReference>
<dbReference type="Proteomes" id="UP000682892">
    <property type="component" value="Unassembled WGS sequence"/>
</dbReference>
<dbReference type="GO" id="GO:0005737">
    <property type="term" value="C:cytoplasm"/>
    <property type="evidence" value="ECO:0007669"/>
    <property type="project" value="TreeGrafter"/>
</dbReference>
<dbReference type="GO" id="GO:0004055">
    <property type="term" value="F:argininosuccinate synthase activity"/>
    <property type="evidence" value="ECO:0007669"/>
    <property type="project" value="UniProtKB-EC"/>
</dbReference>
<dbReference type="GO" id="GO:0005524">
    <property type="term" value="F:ATP binding"/>
    <property type="evidence" value="ECO:0007669"/>
    <property type="project" value="UniProtKB-KW"/>
</dbReference>
<dbReference type="GO" id="GO:0000053">
    <property type="term" value="P:argininosuccinate metabolic process"/>
    <property type="evidence" value="ECO:0007669"/>
    <property type="project" value="TreeGrafter"/>
</dbReference>
<dbReference type="GO" id="GO:0006526">
    <property type="term" value="P:L-arginine biosynthetic process"/>
    <property type="evidence" value="ECO:0007669"/>
    <property type="project" value="UniProtKB-UniPathway"/>
</dbReference>
<dbReference type="GO" id="GO:0000050">
    <property type="term" value="P:urea cycle"/>
    <property type="evidence" value="ECO:0007669"/>
    <property type="project" value="UniProtKB-UniPathway"/>
</dbReference>
<dbReference type="CDD" id="cd01999">
    <property type="entry name" value="ASS"/>
    <property type="match status" value="1"/>
</dbReference>
<dbReference type="FunFam" id="3.40.50.620:FF:000019">
    <property type="entry name" value="Argininosuccinate synthase"/>
    <property type="match status" value="1"/>
</dbReference>
<dbReference type="FunFam" id="3.90.1260.10:FF:000003">
    <property type="entry name" value="Argininosuccinate synthase"/>
    <property type="match status" value="1"/>
</dbReference>
<dbReference type="Gene3D" id="3.90.1260.10">
    <property type="entry name" value="Argininosuccinate synthetase, chain A, domain 2"/>
    <property type="match status" value="1"/>
</dbReference>
<dbReference type="Gene3D" id="3.40.50.620">
    <property type="entry name" value="HUPs"/>
    <property type="match status" value="1"/>
</dbReference>
<dbReference type="HAMAP" id="MF_00005">
    <property type="entry name" value="Arg_succ_synth_type1"/>
    <property type="match status" value="1"/>
</dbReference>
<dbReference type="InterPro" id="IPR048268">
    <property type="entry name" value="Arginosuc_syn_C"/>
</dbReference>
<dbReference type="InterPro" id="IPR048267">
    <property type="entry name" value="Arginosuc_syn_N"/>
</dbReference>
<dbReference type="InterPro" id="IPR001518">
    <property type="entry name" value="Arginosuc_synth"/>
</dbReference>
<dbReference type="InterPro" id="IPR018223">
    <property type="entry name" value="Arginosuc_synth_CS"/>
</dbReference>
<dbReference type="InterPro" id="IPR023434">
    <property type="entry name" value="Arginosuc_synth_type_1_subfam"/>
</dbReference>
<dbReference type="InterPro" id="IPR024074">
    <property type="entry name" value="AS_cat/multimer_dom_body"/>
</dbReference>
<dbReference type="InterPro" id="IPR014729">
    <property type="entry name" value="Rossmann-like_a/b/a_fold"/>
</dbReference>
<dbReference type="NCBIfam" id="TIGR00032">
    <property type="entry name" value="argG"/>
    <property type="match status" value="1"/>
</dbReference>
<dbReference type="NCBIfam" id="NF001770">
    <property type="entry name" value="PRK00509.1"/>
    <property type="match status" value="1"/>
</dbReference>
<dbReference type="PANTHER" id="PTHR11587">
    <property type="entry name" value="ARGININOSUCCINATE SYNTHASE"/>
    <property type="match status" value="1"/>
</dbReference>
<dbReference type="PANTHER" id="PTHR11587:SF2">
    <property type="entry name" value="ARGININOSUCCINATE SYNTHASE"/>
    <property type="match status" value="1"/>
</dbReference>
<dbReference type="Pfam" id="PF20979">
    <property type="entry name" value="Arginosuc_syn_C"/>
    <property type="match status" value="1"/>
</dbReference>
<dbReference type="Pfam" id="PF00764">
    <property type="entry name" value="Arginosuc_synth"/>
    <property type="match status" value="1"/>
</dbReference>
<dbReference type="SUPFAM" id="SSF52402">
    <property type="entry name" value="Adenine nucleotide alpha hydrolases-like"/>
    <property type="match status" value="1"/>
</dbReference>
<dbReference type="SUPFAM" id="SSF69864">
    <property type="entry name" value="Argininosuccinate synthetase, C-terminal domain"/>
    <property type="match status" value="1"/>
</dbReference>
<dbReference type="PROSITE" id="PS00564">
    <property type="entry name" value="ARGININOSUCCIN_SYN_1"/>
    <property type="match status" value="1"/>
</dbReference>
<dbReference type="PROSITE" id="PS00565">
    <property type="entry name" value="ARGININOSUCCIN_SYN_2"/>
    <property type="match status" value="1"/>
</dbReference>
<keyword id="KW-0028">Amino-acid biosynthesis</keyword>
<keyword id="KW-0055">Arginine biosynthesis</keyword>
<keyword id="KW-0067">ATP-binding</keyword>
<keyword id="KW-0436">Ligase</keyword>
<keyword id="KW-0547">Nucleotide-binding</keyword>
<keyword id="KW-1185">Reference proteome</keyword>
<keyword id="KW-0835">Urea cycle</keyword>
<name>ASSY_AEDAE</name>
<reference key="1">
    <citation type="journal article" date="2007" name="Science">
        <title>Genome sequence of Aedes aegypti, a major arbovirus vector.</title>
        <authorList>
            <person name="Nene V."/>
            <person name="Wortman J.R."/>
            <person name="Lawson D."/>
            <person name="Haas B.J."/>
            <person name="Kodira C.D."/>
            <person name="Tu Z.J."/>
            <person name="Loftus B.J."/>
            <person name="Xi Z."/>
            <person name="Megy K."/>
            <person name="Grabherr M."/>
            <person name="Ren Q."/>
            <person name="Zdobnov E.M."/>
            <person name="Lobo N.F."/>
            <person name="Campbell K.S."/>
            <person name="Brown S.E."/>
            <person name="Bonaldo M.F."/>
            <person name="Zhu J."/>
            <person name="Sinkins S.P."/>
            <person name="Hogenkamp D.G."/>
            <person name="Amedeo P."/>
            <person name="Arensburger P."/>
            <person name="Atkinson P.W."/>
            <person name="Bidwell S.L."/>
            <person name="Biedler J."/>
            <person name="Birney E."/>
            <person name="Bruggner R.V."/>
            <person name="Costas J."/>
            <person name="Coy M.R."/>
            <person name="Crabtree J."/>
            <person name="Crawford M."/>
            <person name="DeBruyn B."/>
            <person name="DeCaprio D."/>
            <person name="Eiglmeier K."/>
            <person name="Eisenstadt E."/>
            <person name="El-Dorry H."/>
            <person name="Gelbart W.M."/>
            <person name="Gomes S.L."/>
            <person name="Hammond M."/>
            <person name="Hannick L.I."/>
            <person name="Hogan J.R."/>
            <person name="Holmes M.H."/>
            <person name="Jaffe D."/>
            <person name="Johnston S.J."/>
            <person name="Kennedy R.C."/>
            <person name="Koo H."/>
            <person name="Kravitz S."/>
            <person name="Kriventseva E.V."/>
            <person name="Kulp D."/>
            <person name="Labutti K."/>
            <person name="Lee E."/>
            <person name="Li S."/>
            <person name="Lovin D.D."/>
            <person name="Mao C."/>
            <person name="Mauceli E."/>
            <person name="Menck C.F."/>
            <person name="Miller J.R."/>
            <person name="Montgomery P."/>
            <person name="Mori A."/>
            <person name="Nascimento A.L."/>
            <person name="Naveira H.F."/>
            <person name="Nusbaum C."/>
            <person name="O'Leary S.B."/>
            <person name="Orvis J."/>
            <person name="Pertea M."/>
            <person name="Quesneville H."/>
            <person name="Reidenbach K.R."/>
            <person name="Rogers Y.-H.C."/>
            <person name="Roth C.W."/>
            <person name="Schneider J.R."/>
            <person name="Schatz M."/>
            <person name="Shumway M."/>
            <person name="Stanke M."/>
            <person name="Stinson E.O."/>
            <person name="Tubio J.M.C."/>
            <person name="Vanzee J.P."/>
            <person name="Verjovski-Almeida S."/>
            <person name="Werner D."/>
            <person name="White O.R."/>
            <person name="Wyder S."/>
            <person name="Zeng Q."/>
            <person name="Zhao Q."/>
            <person name="Zhao Y."/>
            <person name="Hill C.A."/>
            <person name="Raikhel A.S."/>
            <person name="Soares M.B."/>
            <person name="Knudson D.L."/>
            <person name="Lee N.H."/>
            <person name="Galagan J."/>
            <person name="Salzberg S.L."/>
            <person name="Paulsen I.T."/>
            <person name="Dimopoulos G."/>
            <person name="Collins F.H."/>
            <person name="Bruce B."/>
            <person name="Fraser-Liggett C.M."/>
            <person name="Severson D.W."/>
        </authorList>
    </citation>
    <scope>NUCLEOTIDE SEQUENCE [LARGE SCALE GENOMIC DNA]</scope>
    <source>
        <strain>LVPib12</strain>
    </source>
</reference>
<protein>
    <recommendedName>
        <fullName>Argininosuccinate synthase</fullName>
        <ecNumber>6.3.4.5</ecNumber>
    </recommendedName>
    <alternativeName>
        <fullName>Citrulline--aspartate ligase</fullName>
    </alternativeName>
</protein>
<evidence type="ECO:0000250" key="1"/>
<evidence type="ECO:0000305" key="2"/>